<accession>Q49KW0</accession>
<keyword id="KW-0150">Chloroplast</keyword>
<keyword id="KW-0934">Plastid</keyword>
<keyword id="KW-0687">Ribonucleoprotein</keyword>
<keyword id="KW-0689">Ribosomal protein</keyword>
<keyword id="KW-0694">RNA-binding</keyword>
<keyword id="KW-0699">rRNA-binding</keyword>
<evidence type="ECO:0000250" key="1"/>
<evidence type="ECO:0000305" key="2"/>
<protein>
    <recommendedName>
        <fullName evidence="2">Small ribosomal subunit protein uS3c</fullName>
    </recommendedName>
    <alternativeName>
        <fullName>30S ribosomal protein S3, chloroplastic</fullName>
    </alternativeName>
</protein>
<organism>
    <name type="scientific">Eucalyptus globulus subsp. globulus</name>
    <name type="common">Tasmanian blue gum</name>
    <dbReference type="NCBI Taxonomy" id="71271"/>
    <lineage>
        <taxon>Eukaryota</taxon>
        <taxon>Viridiplantae</taxon>
        <taxon>Streptophyta</taxon>
        <taxon>Embryophyta</taxon>
        <taxon>Tracheophyta</taxon>
        <taxon>Spermatophyta</taxon>
        <taxon>Magnoliopsida</taxon>
        <taxon>eudicotyledons</taxon>
        <taxon>Gunneridae</taxon>
        <taxon>Pentapetalae</taxon>
        <taxon>rosids</taxon>
        <taxon>malvids</taxon>
        <taxon>Myrtales</taxon>
        <taxon>Myrtaceae</taxon>
        <taxon>Myrtoideae</taxon>
        <taxon>Eucalypteae</taxon>
        <taxon>Eucalyptus</taxon>
    </lineage>
</organism>
<name>RR3_EUCGG</name>
<dbReference type="EMBL" id="AY780259">
    <property type="protein sequence ID" value="AAX21065.1"/>
    <property type="molecule type" value="Genomic_DNA"/>
</dbReference>
<dbReference type="RefSeq" id="YP_636337.1">
    <property type="nucleotide sequence ID" value="NC_008115.1"/>
</dbReference>
<dbReference type="SMR" id="Q49KW0"/>
<dbReference type="GeneID" id="4108487"/>
<dbReference type="GO" id="GO:0009507">
    <property type="term" value="C:chloroplast"/>
    <property type="evidence" value="ECO:0007669"/>
    <property type="project" value="UniProtKB-SubCell"/>
</dbReference>
<dbReference type="GO" id="GO:0022627">
    <property type="term" value="C:cytosolic small ribosomal subunit"/>
    <property type="evidence" value="ECO:0007669"/>
    <property type="project" value="TreeGrafter"/>
</dbReference>
<dbReference type="GO" id="GO:0019843">
    <property type="term" value="F:rRNA binding"/>
    <property type="evidence" value="ECO:0007669"/>
    <property type="project" value="UniProtKB-UniRule"/>
</dbReference>
<dbReference type="GO" id="GO:0003735">
    <property type="term" value="F:structural constituent of ribosome"/>
    <property type="evidence" value="ECO:0007669"/>
    <property type="project" value="InterPro"/>
</dbReference>
<dbReference type="GO" id="GO:0006412">
    <property type="term" value="P:translation"/>
    <property type="evidence" value="ECO:0007669"/>
    <property type="project" value="UniProtKB-UniRule"/>
</dbReference>
<dbReference type="CDD" id="cd02412">
    <property type="entry name" value="KH-II_30S_S3"/>
    <property type="match status" value="1"/>
</dbReference>
<dbReference type="FunFam" id="3.30.1140.32:FF:000003">
    <property type="entry name" value="30S ribosomal protein S3, chloroplastic"/>
    <property type="match status" value="1"/>
</dbReference>
<dbReference type="FunFam" id="3.30.300.20:FF:000008">
    <property type="entry name" value="30S ribosomal protein S3, chloroplastic"/>
    <property type="match status" value="1"/>
</dbReference>
<dbReference type="Gene3D" id="3.30.300.20">
    <property type="match status" value="1"/>
</dbReference>
<dbReference type="Gene3D" id="3.30.1140.32">
    <property type="entry name" value="Ribosomal protein S3, C-terminal domain"/>
    <property type="match status" value="1"/>
</dbReference>
<dbReference type="HAMAP" id="MF_01309_B">
    <property type="entry name" value="Ribosomal_uS3_B"/>
    <property type="match status" value="1"/>
</dbReference>
<dbReference type="InterPro" id="IPR015946">
    <property type="entry name" value="KH_dom-like_a/b"/>
</dbReference>
<dbReference type="InterPro" id="IPR004044">
    <property type="entry name" value="KH_dom_type_2"/>
</dbReference>
<dbReference type="InterPro" id="IPR009019">
    <property type="entry name" value="KH_sf_prok-type"/>
</dbReference>
<dbReference type="InterPro" id="IPR036419">
    <property type="entry name" value="Ribosomal_S3_C_sf"/>
</dbReference>
<dbReference type="InterPro" id="IPR005704">
    <property type="entry name" value="Ribosomal_uS3_bac-typ"/>
</dbReference>
<dbReference type="InterPro" id="IPR001351">
    <property type="entry name" value="Ribosomal_uS3_C"/>
</dbReference>
<dbReference type="InterPro" id="IPR018280">
    <property type="entry name" value="Ribosomal_uS3_CS"/>
</dbReference>
<dbReference type="NCBIfam" id="TIGR01009">
    <property type="entry name" value="rpsC_bact"/>
    <property type="match status" value="1"/>
</dbReference>
<dbReference type="PANTHER" id="PTHR11760">
    <property type="entry name" value="30S/40S RIBOSOMAL PROTEIN S3"/>
    <property type="match status" value="1"/>
</dbReference>
<dbReference type="PANTHER" id="PTHR11760:SF19">
    <property type="entry name" value="SMALL RIBOSOMAL SUBUNIT PROTEIN US3C"/>
    <property type="match status" value="1"/>
</dbReference>
<dbReference type="Pfam" id="PF00189">
    <property type="entry name" value="Ribosomal_S3_C"/>
    <property type="match status" value="1"/>
</dbReference>
<dbReference type="SUPFAM" id="SSF54814">
    <property type="entry name" value="Prokaryotic type KH domain (KH-domain type II)"/>
    <property type="match status" value="1"/>
</dbReference>
<dbReference type="SUPFAM" id="SSF54821">
    <property type="entry name" value="Ribosomal protein S3 C-terminal domain"/>
    <property type="match status" value="1"/>
</dbReference>
<dbReference type="PROSITE" id="PS50823">
    <property type="entry name" value="KH_TYPE_2"/>
    <property type="match status" value="1"/>
</dbReference>
<dbReference type="PROSITE" id="PS00548">
    <property type="entry name" value="RIBOSOMAL_S3"/>
    <property type="match status" value="1"/>
</dbReference>
<reference key="1">
    <citation type="journal article" date="2005" name="DNA Res.">
        <title>Complete nucleotide sequence of the chloroplast genome from the Tasmanian blue gum, Eucalyptus globulus (Myrtaceae).</title>
        <authorList>
            <person name="Steane D.A."/>
        </authorList>
    </citation>
    <scope>NUCLEOTIDE SEQUENCE [LARGE SCALE GENOMIC DNA]</scope>
</reference>
<proteinExistence type="inferred from homology"/>
<sequence length="216" mass="24925">MGQKINPLGFRLGTTQGHHSIWFAQAKNYSDGLQEDQKIRNCIKNYLQKNMRISSGVEGIARIEIRKRIDLIQVIIYMGFPKLLLEGKTRRIEELQMNVQKELNCVNRKLNIAITRITNPYGHPNILAEFIAGQLKNRVSFRKAIKKAIELTEQADTKGIQVQIAGRLDGKEIARVEWMREGRVPLQTIRAKIDYCSYGVRTVYGVLGIKIWIFWE</sequence>
<feature type="chain" id="PRO_0000230750" description="Small ribosomal subunit protein uS3c">
    <location>
        <begin position="1"/>
        <end position="216"/>
    </location>
</feature>
<feature type="domain" description="KH type-2">
    <location>
        <begin position="43"/>
        <end position="118"/>
    </location>
</feature>
<comment type="subunit">
    <text evidence="1">Part of the 30S ribosomal subunit.</text>
</comment>
<comment type="subcellular location">
    <subcellularLocation>
        <location>Plastid</location>
        <location>Chloroplast</location>
    </subcellularLocation>
</comment>
<comment type="similarity">
    <text evidence="2">Belongs to the universal ribosomal protein uS3 family.</text>
</comment>
<gene>
    <name type="primary">rps3</name>
</gene>
<geneLocation type="chloroplast"/>